<organism>
    <name type="scientific">Cupriavidus necator (strain ATCC 17699 / DSM 428 / KCTC 22496 / NCIMB 10442 / H16 / Stanier 337)</name>
    <name type="common">Ralstonia eutropha</name>
    <dbReference type="NCBI Taxonomy" id="381666"/>
    <lineage>
        <taxon>Bacteria</taxon>
        <taxon>Pseudomonadati</taxon>
        <taxon>Pseudomonadota</taxon>
        <taxon>Betaproteobacteria</taxon>
        <taxon>Burkholderiales</taxon>
        <taxon>Burkholderiaceae</taxon>
        <taxon>Cupriavidus</taxon>
    </lineage>
</organism>
<reference key="1">
    <citation type="submission" date="1999-04" db="EMBL/GenBank/DDBJ databases">
        <title>Cloning and sequencing of the gene for beta-hydroxybutyrate dehydrogenase from Ralstonia eutropha.</title>
        <authorList>
            <person name="Kim J.W."/>
            <person name="Kang D.G."/>
            <person name="Rha E.G."/>
        </authorList>
    </citation>
    <scope>NUCLEOTIDE SEQUENCE [GENOMIC DNA]</scope>
</reference>
<reference key="2">
    <citation type="journal article" date="2006" name="Nat. Biotechnol.">
        <title>Genome sequence of the bioplastic-producing 'Knallgas' bacterium Ralstonia eutropha H16.</title>
        <authorList>
            <person name="Pohlmann A."/>
            <person name="Fricke W.F."/>
            <person name="Reinecke F."/>
            <person name="Kusian B."/>
            <person name="Liesegang H."/>
            <person name="Cramm R."/>
            <person name="Eitinger T."/>
            <person name="Ewering C."/>
            <person name="Poetter M."/>
            <person name="Schwartz E."/>
            <person name="Strittmatter A."/>
            <person name="Voss I."/>
            <person name="Gottschalk G."/>
            <person name="Steinbuechel A."/>
            <person name="Friedrich B."/>
            <person name="Bowien B."/>
        </authorList>
    </citation>
    <scope>NUCLEOTIDE SEQUENCE [LARGE SCALE GENOMIC DNA]</scope>
    <source>
        <strain>ATCC 17699 / DSM 428 / KCTC 22496 / NCIMB 10442 / H16 / Stanier 337</strain>
    </source>
</reference>
<dbReference type="EC" id="1.1.1.30"/>
<dbReference type="EMBL" id="AF145230">
    <property type="protein sequence ID" value="AAD33952.1"/>
    <property type="molecule type" value="Genomic_DNA"/>
</dbReference>
<dbReference type="EMBL" id="AM260479">
    <property type="protein sequence ID" value="CAJ92474.1"/>
    <property type="molecule type" value="Genomic_DNA"/>
</dbReference>
<dbReference type="RefSeq" id="WP_010813107.1">
    <property type="nucleotide sequence ID" value="NZ_CP039287.1"/>
</dbReference>
<dbReference type="SMR" id="Q9X6U2"/>
<dbReference type="STRING" id="381666.H16_A1334"/>
<dbReference type="KEGG" id="reh:H16_A1334"/>
<dbReference type="eggNOG" id="COG1028">
    <property type="taxonomic scope" value="Bacteria"/>
</dbReference>
<dbReference type="HOGENOM" id="CLU_010194_1_0_4"/>
<dbReference type="OrthoDB" id="9786435at2"/>
<dbReference type="Proteomes" id="UP000008210">
    <property type="component" value="Chromosome 1"/>
</dbReference>
<dbReference type="GO" id="GO:0003858">
    <property type="term" value="F:3-hydroxybutyrate dehydrogenase activity"/>
    <property type="evidence" value="ECO:0007669"/>
    <property type="project" value="UniProtKB-EC"/>
</dbReference>
<dbReference type="GO" id="GO:0006629">
    <property type="term" value="P:lipid metabolic process"/>
    <property type="evidence" value="ECO:0007669"/>
    <property type="project" value="UniProtKB-ARBA"/>
</dbReference>
<dbReference type="GO" id="GO:0032787">
    <property type="term" value="P:monocarboxylic acid metabolic process"/>
    <property type="evidence" value="ECO:0007669"/>
    <property type="project" value="UniProtKB-ARBA"/>
</dbReference>
<dbReference type="CDD" id="cd08940">
    <property type="entry name" value="HBDH_SDR_c"/>
    <property type="match status" value="1"/>
</dbReference>
<dbReference type="FunFam" id="3.40.50.720:FF:000084">
    <property type="entry name" value="Short-chain dehydrogenase reductase"/>
    <property type="match status" value="1"/>
</dbReference>
<dbReference type="Gene3D" id="3.40.50.720">
    <property type="entry name" value="NAD(P)-binding Rossmann-like Domain"/>
    <property type="match status" value="1"/>
</dbReference>
<dbReference type="InterPro" id="IPR011294">
    <property type="entry name" value="3-OHbutyrate_DH"/>
</dbReference>
<dbReference type="InterPro" id="IPR036291">
    <property type="entry name" value="NAD(P)-bd_dom_sf"/>
</dbReference>
<dbReference type="InterPro" id="IPR020904">
    <property type="entry name" value="Sc_DH/Rdtase_CS"/>
</dbReference>
<dbReference type="InterPro" id="IPR050259">
    <property type="entry name" value="SDR"/>
</dbReference>
<dbReference type="InterPro" id="IPR002347">
    <property type="entry name" value="SDR_fam"/>
</dbReference>
<dbReference type="NCBIfam" id="TIGR01963">
    <property type="entry name" value="PHB_DH"/>
    <property type="match status" value="1"/>
</dbReference>
<dbReference type="NCBIfam" id="NF009093">
    <property type="entry name" value="PRK12429.1"/>
    <property type="match status" value="1"/>
</dbReference>
<dbReference type="PANTHER" id="PTHR42879">
    <property type="entry name" value="3-OXOACYL-(ACYL-CARRIER-PROTEIN) REDUCTASE"/>
    <property type="match status" value="1"/>
</dbReference>
<dbReference type="PANTHER" id="PTHR42879:SF2">
    <property type="entry name" value="3-OXOACYL-[ACYL-CARRIER-PROTEIN] REDUCTASE FABG"/>
    <property type="match status" value="1"/>
</dbReference>
<dbReference type="Pfam" id="PF00106">
    <property type="entry name" value="adh_short"/>
    <property type="match status" value="1"/>
</dbReference>
<dbReference type="PRINTS" id="PR00081">
    <property type="entry name" value="GDHRDH"/>
</dbReference>
<dbReference type="PRINTS" id="PR00080">
    <property type="entry name" value="SDRFAMILY"/>
</dbReference>
<dbReference type="SUPFAM" id="SSF51735">
    <property type="entry name" value="NAD(P)-binding Rossmann-fold domains"/>
    <property type="match status" value="1"/>
</dbReference>
<dbReference type="PROSITE" id="PS00061">
    <property type="entry name" value="ADH_SHORT"/>
    <property type="match status" value="1"/>
</dbReference>
<accession>Q9X6U2</accession>
<accession>Q0KBZ7</accession>
<feature type="chain" id="PRO_0000054527" description="D-beta-hydroxybutyrate dehydrogenase">
    <location>
        <begin position="1"/>
        <end position="258"/>
    </location>
</feature>
<feature type="active site" description="Proton acceptor" evidence="2">
    <location>
        <position position="153"/>
    </location>
</feature>
<feature type="binding site" evidence="1">
    <location>
        <begin position="8"/>
        <end position="32"/>
    </location>
    <ligand>
        <name>NAD(+)</name>
        <dbReference type="ChEBI" id="CHEBI:57540"/>
    </ligand>
</feature>
<feature type="binding site" evidence="1">
    <location>
        <position position="140"/>
    </location>
    <ligand>
        <name>substrate</name>
    </ligand>
</feature>
<feature type="sequence conflict" description="In Ref. 1; AAD33952." evidence="3" ref="1">
    <original>L</original>
    <variation>Q</variation>
    <location>
        <position position="236"/>
    </location>
</feature>
<protein>
    <recommendedName>
        <fullName>D-beta-hydroxybutyrate dehydrogenase</fullName>
        <shortName>BDH</shortName>
        <ecNumber>1.1.1.30</ecNumber>
    </recommendedName>
    <alternativeName>
        <fullName>3-hydroxybutyrate dehydrogenase</fullName>
        <shortName>3-HBDH</shortName>
    </alternativeName>
</protein>
<proteinExistence type="inferred from homology"/>
<keyword id="KW-0520">NAD</keyword>
<keyword id="KW-0560">Oxidoreductase</keyword>
<keyword id="KW-1185">Reference proteome</keyword>
<name>BDHA_CUPNH</name>
<comment type="catalytic activity">
    <reaction>
        <text>(R)-3-hydroxybutanoate + NAD(+) = acetoacetate + NADH + H(+)</text>
        <dbReference type="Rhea" id="RHEA:20521"/>
        <dbReference type="ChEBI" id="CHEBI:10983"/>
        <dbReference type="ChEBI" id="CHEBI:13705"/>
        <dbReference type="ChEBI" id="CHEBI:15378"/>
        <dbReference type="ChEBI" id="CHEBI:57540"/>
        <dbReference type="ChEBI" id="CHEBI:57945"/>
        <dbReference type="EC" id="1.1.1.30"/>
    </reaction>
</comment>
<comment type="similarity">
    <text evidence="3">Belongs to the short-chain dehydrogenases/reductases (SDR) family.</text>
</comment>
<sequence>MLNGKTALVTGSTSGIGLGIAKALAAQGANIIVNGFGDADAAKAEIAQAGQGIRVGYHGADMSKAAEIEDMMRYAQSDFGGADILVNNAGIQHVAAIEDFPPERWDAIIAINLTSAFHTTRLALPGMKQKDWGRIINVASTHGLVASAQKSAYVAAKHGIVGFTKVTALETAQTGVTANAICPGWVLTPLVQKQVEARAQKEGIPVEQAKRELVLEKQPSGQFVTPDELGALAVFLSSEAARQVRGAIWNMDGGWVAQ</sequence>
<evidence type="ECO:0000250" key="1"/>
<evidence type="ECO:0000255" key="2">
    <source>
        <dbReference type="PROSITE-ProRule" id="PRU10001"/>
    </source>
</evidence>
<evidence type="ECO:0000305" key="3"/>
<gene>
    <name type="primary">hbdH1</name>
    <name type="ordered locus">H16_A1334</name>
</gene>